<proteinExistence type="inferred from homology"/>
<accession>P67328</accession>
<accession>Q8DYP1</accession>
<accession>Q8E498</accession>
<comment type="function">
    <text evidence="1">Catalyzes oxygen-dependent 5-hydroxyuridine (ho5U) modification at position 34 in tRNAs.</text>
</comment>
<comment type="catalytic activity">
    <reaction evidence="1">
        <text>uridine(34) in tRNA + AH2 + O2 = 5-hydroxyuridine(34) in tRNA + A + H2O</text>
        <dbReference type="Rhea" id="RHEA:64224"/>
        <dbReference type="Rhea" id="RHEA-COMP:11727"/>
        <dbReference type="Rhea" id="RHEA-COMP:13381"/>
        <dbReference type="ChEBI" id="CHEBI:13193"/>
        <dbReference type="ChEBI" id="CHEBI:15377"/>
        <dbReference type="ChEBI" id="CHEBI:15379"/>
        <dbReference type="ChEBI" id="CHEBI:17499"/>
        <dbReference type="ChEBI" id="CHEBI:65315"/>
        <dbReference type="ChEBI" id="CHEBI:136877"/>
    </reaction>
</comment>
<comment type="similarity">
    <text evidence="1">Belongs to the TrhO family.</text>
</comment>
<feature type="chain" id="PRO_0000161521" description="tRNA uridine(34) hydroxylase">
    <location>
        <begin position="1"/>
        <end position="328"/>
    </location>
</feature>
<feature type="domain" description="Rhodanese" evidence="1">
    <location>
        <begin position="130"/>
        <end position="224"/>
    </location>
</feature>
<feature type="active site" description="Cysteine persulfide intermediate" evidence="1">
    <location>
        <position position="184"/>
    </location>
</feature>
<name>TRHO_STRA3</name>
<evidence type="ECO:0000255" key="1">
    <source>
        <dbReference type="HAMAP-Rule" id="MF_00469"/>
    </source>
</evidence>
<reference key="1">
    <citation type="journal article" date="2002" name="Mol. Microbiol.">
        <title>Genome sequence of Streptococcus agalactiae, a pathogen causing invasive neonatal disease.</title>
        <authorList>
            <person name="Glaser P."/>
            <person name="Rusniok C."/>
            <person name="Buchrieser C."/>
            <person name="Chevalier F."/>
            <person name="Frangeul L."/>
            <person name="Msadek T."/>
            <person name="Zouine M."/>
            <person name="Couve E."/>
            <person name="Lalioui L."/>
            <person name="Poyart C."/>
            <person name="Trieu-Cuot P."/>
            <person name="Kunst F."/>
        </authorList>
    </citation>
    <scope>NUCLEOTIDE SEQUENCE [LARGE SCALE GENOMIC DNA]</scope>
    <source>
        <strain>NEM316</strain>
    </source>
</reference>
<protein>
    <recommendedName>
        <fullName evidence="1">tRNA uridine(34) hydroxylase</fullName>
        <ecNumber evidence="1">1.14.-.-</ecNumber>
    </recommendedName>
    <alternativeName>
        <fullName evidence="1">tRNA hydroxylation protein O</fullName>
    </alternativeName>
</protein>
<gene>
    <name evidence="1" type="primary">trhO</name>
    <name type="ordered locus">gbs1504</name>
</gene>
<dbReference type="EC" id="1.14.-.-" evidence="1"/>
<dbReference type="EMBL" id="AL766851">
    <property type="protein sequence ID" value="CAD47163.1"/>
    <property type="molecule type" value="Genomic_DNA"/>
</dbReference>
<dbReference type="RefSeq" id="WP_001290916.1">
    <property type="nucleotide sequence ID" value="NC_004368.1"/>
</dbReference>
<dbReference type="SMR" id="P67328"/>
<dbReference type="KEGG" id="san:gbs1504"/>
<dbReference type="eggNOG" id="COG1054">
    <property type="taxonomic scope" value="Bacteria"/>
</dbReference>
<dbReference type="HOGENOM" id="CLU_038878_1_0_9"/>
<dbReference type="Proteomes" id="UP000000823">
    <property type="component" value="Chromosome"/>
</dbReference>
<dbReference type="GO" id="GO:0016705">
    <property type="term" value="F:oxidoreductase activity, acting on paired donors, with incorporation or reduction of molecular oxygen"/>
    <property type="evidence" value="ECO:0007669"/>
    <property type="project" value="UniProtKB-UniRule"/>
</dbReference>
<dbReference type="GO" id="GO:0006400">
    <property type="term" value="P:tRNA modification"/>
    <property type="evidence" value="ECO:0007669"/>
    <property type="project" value="UniProtKB-UniRule"/>
</dbReference>
<dbReference type="CDD" id="cd01518">
    <property type="entry name" value="RHOD_YceA"/>
    <property type="match status" value="1"/>
</dbReference>
<dbReference type="Gene3D" id="3.30.70.100">
    <property type="match status" value="1"/>
</dbReference>
<dbReference type="Gene3D" id="3.40.250.10">
    <property type="entry name" value="Rhodanese-like domain"/>
    <property type="match status" value="1"/>
</dbReference>
<dbReference type="HAMAP" id="MF_00469">
    <property type="entry name" value="TrhO"/>
    <property type="match status" value="1"/>
</dbReference>
<dbReference type="InterPro" id="IPR001763">
    <property type="entry name" value="Rhodanese-like_dom"/>
</dbReference>
<dbReference type="InterPro" id="IPR036873">
    <property type="entry name" value="Rhodanese-like_dom_sf"/>
</dbReference>
<dbReference type="InterPro" id="IPR022111">
    <property type="entry name" value="Rhodanese_C"/>
</dbReference>
<dbReference type="InterPro" id="IPR020936">
    <property type="entry name" value="TrhO"/>
</dbReference>
<dbReference type="InterPro" id="IPR040503">
    <property type="entry name" value="TRHO_N"/>
</dbReference>
<dbReference type="NCBIfam" id="NF001135">
    <property type="entry name" value="PRK00142.1-3"/>
    <property type="match status" value="1"/>
</dbReference>
<dbReference type="NCBIfam" id="NF001137">
    <property type="entry name" value="PRK00142.1-5"/>
    <property type="match status" value="1"/>
</dbReference>
<dbReference type="PANTHER" id="PTHR43268:SF3">
    <property type="entry name" value="RHODANESE-LIKE DOMAIN-CONTAINING PROTEIN 7-RELATED"/>
    <property type="match status" value="1"/>
</dbReference>
<dbReference type="PANTHER" id="PTHR43268">
    <property type="entry name" value="THIOSULFATE SULFURTRANSFERASE/RHODANESE-LIKE DOMAIN-CONTAINING PROTEIN 2"/>
    <property type="match status" value="1"/>
</dbReference>
<dbReference type="Pfam" id="PF00581">
    <property type="entry name" value="Rhodanese"/>
    <property type="match status" value="1"/>
</dbReference>
<dbReference type="Pfam" id="PF12368">
    <property type="entry name" value="Rhodanese_C"/>
    <property type="match status" value="1"/>
</dbReference>
<dbReference type="Pfam" id="PF17773">
    <property type="entry name" value="UPF0176_N"/>
    <property type="match status" value="1"/>
</dbReference>
<dbReference type="SMART" id="SM00450">
    <property type="entry name" value="RHOD"/>
    <property type="match status" value="1"/>
</dbReference>
<dbReference type="SUPFAM" id="SSF52821">
    <property type="entry name" value="Rhodanese/Cell cycle control phosphatase"/>
    <property type="match status" value="1"/>
</dbReference>
<dbReference type="PROSITE" id="PS50206">
    <property type="entry name" value="RHODANESE_3"/>
    <property type="match status" value="1"/>
</dbReference>
<sequence>MSEKIRVLLYYKYVSIENAEEYAAKHLEFCKSIGLKGRILIADEGINGTVSGDYETTQKYMDWVHSDERFADLWFKIDEENQQAFRKMFVRYKKEIVHLGLEDNNFDSDINPLETTGEYLNPKQFKEALLDEDTVVLDTRNDYEYDLGHFRGAIRPDIRNFRELPQWVRDNKDKFMEKRVVVYCTGGVRCEKFSGWMVREGFKDVGQLHGGIATYGKDPEVQGELWDGAMYVFDDRISVPINHVNPTVISKDYFDGTPCERYVNCANPFCNKQIFASEENEAKYVRGCSPECRAHERNRYVQENGLSRQEWAERLEAIGESLPQVANV</sequence>
<keyword id="KW-0560">Oxidoreductase</keyword>
<keyword id="KW-0819">tRNA processing</keyword>
<organism>
    <name type="scientific">Streptococcus agalactiae serotype III (strain NEM316)</name>
    <dbReference type="NCBI Taxonomy" id="211110"/>
    <lineage>
        <taxon>Bacteria</taxon>
        <taxon>Bacillati</taxon>
        <taxon>Bacillota</taxon>
        <taxon>Bacilli</taxon>
        <taxon>Lactobacillales</taxon>
        <taxon>Streptococcaceae</taxon>
        <taxon>Streptococcus</taxon>
    </lineage>
</organism>